<dbReference type="EMBL" id="AL136633">
    <property type="protein sequence ID" value="CAB66568.1"/>
    <property type="molecule type" value="mRNA"/>
</dbReference>
<dbReference type="EMBL" id="AF161556">
    <property type="protein sequence ID" value="AAF29043.1"/>
    <property type="molecule type" value="mRNA"/>
</dbReference>
<dbReference type="EMBL" id="CR533491">
    <property type="protein sequence ID" value="CAG38522.1"/>
    <property type="molecule type" value="mRNA"/>
</dbReference>
<dbReference type="EMBL" id="AL139045">
    <property type="status" value="NOT_ANNOTATED_CDS"/>
    <property type="molecule type" value="Genomic_DNA"/>
</dbReference>
<dbReference type="EMBL" id="AL135914">
    <property type="status" value="NOT_ANNOTATED_CDS"/>
    <property type="molecule type" value="Genomic_DNA"/>
</dbReference>
<dbReference type="EMBL" id="BC001623">
    <property type="protein sequence ID" value="AAH01623.1"/>
    <property type="molecule type" value="mRNA"/>
</dbReference>
<dbReference type="CCDS" id="CCDS5270.1"/>
<dbReference type="RefSeq" id="NP_001305746.1">
    <property type="nucleotide sequence ID" value="NM_001318817.1"/>
</dbReference>
<dbReference type="RefSeq" id="NP_054880.2">
    <property type="nucleotide sequence ID" value="NM_014161.4"/>
</dbReference>
<dbReference type="PDB" id="3J7Y">
    <property type="method" value="EM"/>
    <property type="resolution" value="3.40 A"/>
    <property type="chains" value="P=1-180"/>
</dbReference>
<dbReference type="PDB" id="5OOL">
    <property type="method" value="EM"/>
    <property type="resolution" value="3.06 A"/>
    <property type="chains" value="P=1-180"/>
</dbReference>
<dbReference type="PDB" id="5OOM">
    <property type="method" value="EM"/>
    <property type="resolution" value="3.03 A"/>
    <property type="chains" value="P=1-180"/>
</dbReference>
<dbReference type="PDB" id="6NU2">
    <property type="method" value="EM"/>
    <property type="resolution" value="3.90 A"/>
    <property type="chains" value="P=43-180"/>
</dbReference>
<dbReference type="PDB" id="6NU3">
    <property type="method" value="EM"/>
    <property type="resolution" value="4.40 A"/>
    <property type="chains" value="P=1-180"/>
</dbReference>
<dbReference type="PDB" id="6ZM5">
    <property type="method" value="EM"/>
    <property type="resolution" value="2.89 A"/>
    <property type="chains" value="P=1-180"/>
</dbReference>
<dbReference type="PDB" id="6ZM6">
    <property type="method" value="EM"/>
    <property type="resolution" value="2.59 A"/>
    <property type="chains" value="P=1-180"/>
</dbReference>
<dbReference type="PDB" id="6ZSA">
    <property type="method" value="EM"/>
    <property type="resolution" value="4.00 A"/>
    <property type="chains" value="XP=1-180"/>
</dbReference>
<dbReference type="PDB" id="6ZSB">
    <property type="method" value="EM"/>
    <property type="resolution" value="4.50 A"/>
    <property type="chains" value="XP=1-180"/>
</dbReference>
<dbReference type="PDB" id="6ZSC">
    <property type="method" value="EM"/>
    <property type="resolution" value="3.50 A"/>
    <property type="chains" value="XP=1-180"/>
</dbReference>
<dbReference type="PDB" id="6ZSD">
    <property type="method" value="EM"/>
    <property type="resolution" value="3.70 A"/>
    <property type="chains" value="XP=1-180"/>
</dbReference>
<dbReference type="PDB" id="6ZSE">
    <property type="method" value="EM"/>
    <property type="resolution" value="5.00 A"/>
    <property type="chains" value="XP=1-180"/>
</dbReference>
<dbReference type="PDB" id="6ZSG">
    <property type="method" value="EM"/>
    <property type="resolution" value="4.00 A"/>
    <property type="chains" value="XP=1-180"/>
</dbReference>
<dbReference type="PDB" id="7A5F">
    <property type="method" value="EM"/>
    <property type="resolution" value="4.40 A"/>
    <property type="chains" value="P3=1-180"/>
</dbReference>
<dbReference type="PDB" id="7A5G">
    <property type="method" value="EM"/>
    <property type="resolution" value="4.33 A"/>
    <property type="chains" value="P3=1-180"/>
</dbReference>
<dbReference type="PDB" id="7A5J">
    <property type="method" value="EM"/>
    <property type="resolution" value="3.10 A"/>
    <property type="chains" value="P=1-180"/>
</dbReference>
<dbReference type="PDB" id="7ODR">
    <property type="method" value="EM"/>
    <property type="resolution" value="2.90 A"/>
    <property type="chains" value="P=1-180"/>
</dbReference>
<dbReference type="PDB" id="7ODS">
    <property type="method" value="EM"/>
    <property type="resolution" value="3.10 A"/>
    <property type="chains" value="P=1-180"/>
</dbReference>
<dbReference type="PDB" id="7ODT">
    <property type="method" value="EM"/>
    <property type="resolution" value="3.10 A"/>
    <property type="chains" value="P=1-180"/>
</dbReference>
<dbReference type="PDB" id="7OF0">
    <property type="method" value="EM"/>
    <property type="resolution" value="2.20 A"/>
    <property type="chains" value="P=1-180"/>
</dbReference>
<dbReference type="PDB" id="7OF2">
    <property type="method" value="EM"/>
    <property type="resolution" value="2.70 A"/>
    <property type="chains" value="P=1-180"/>
</dbReference>
<dbReference type="PDB" id="7OF3">
    <property type="method" value="EM"/>
    <property type="resolution" value="2.70 A"/>
    <property type="chains" value="P=1-180"/>
</dbReference>
<dbReference type="PDB" id="7OF4">
    <property type="method" value="EM"/>
    <property type="resolution" value="2.70 A"/>
    <property type="chains" value="P=1-180"/>
</dbReference>
<dbReference type="PDB" id="7OF5">
    <property type="method" value="EM"/>
    <property type="resolution" value="2.90 A"/>
    <property type="chains" value="P=1-180"/>
</dbReference>
<dbReference type="PDB" id="7OF6">
    <property type="method" value="EM"/>
    <property type="resolution" value="2.60 A"/>
    <property type="chains" value="P=1-180"/>
</dbReference>
<dbReference type="PDB" id="7OF7">
    <property type="method" value="EM"/>
    <property type="resolution" value="2.50 A"/>
    <property type="chains" value="P=1-180"/>
</dbReference>
<dbReference type="PDB" id="7OG4">
    <property type="method" value="EM"/>
    <property type="resolution" value="3.80 A"/>
    <property type="chains" value="XP=1-180"/>
</dbReference>
<dbReference type="PDB" id="7OI6">
    <property type="method" value="EM"/>
    <property type="resolution" value="5.70 A"/>
    <property type="chains" value="P=1-180"/>
</dbReference>
<dbReference type="PDB" id="7OI7">
    <property type="method" value="EM"/>
    <property type="resolution" value="3.50 A"/>
    <property type="chains" value="P=1-180"/>
</dbReference>
<dbReference type="PDB" id="7OI8">
    <property type="method" value="EM"/>
    <property type="resolution" value="3.50 A"/>
    <property type="chains" value="P=1-180"/>
</dbReference>
<dbReference type="PDB" id="7OI9">
    <property type="method" value="EM"/>
    <property type="resolution" value="3.30 A"/>
    <property type="chains" value="P=1-180"/>
</dbReference>
<dbReference type="PDB" id="7OIA">
    <property type="method" value="EM"/>
    <property type="resolution" value="3.20 A"/>
    <property type="chains" value="P=1-180"/>
</dbReference>
<dbReference type="PDB" id="7OIB">
    <property type="method" value="EM"/>
    <property type="resolution" value="3.30 A"/>
    <property type="chains" value="P=1-180"/>
</dbReference>
<dbReference type="PDB" id="7OIC">
    <property type="method" value="EM"/>
    <property type="resolution" value="3.10 A"/>
    <property type="chains" value="P=1-180"/>
</dbReference>
<dbReference type="PDB" id="7OID">
    <property type="method" value="EM"/>
    <property type="resolution" value="3.70 A"/>
    <property type="chains" value="P=1-180"/>
</dbReference>
<dbReference type="PDB" id="7OIE">
    <property type="method" value="EM"/>
    <property type="resolution" value="3.50 A"/>
    <property type="chains" value="P=1-180"/>
</dbReference>
<dbReference type="PDB" id="7PD3">
    <property type="method" value="EM"/>
    <property type="resolution" value="3.40 A"/>
    <property type="chains" value="P=1-180"/>
</dbReference>
<dbReference type="PDB" id="7PO4">
    <property type="method" value="EM"/>
    <property type="resolution" value="2.56 A"/>
    <property type="chains" value="P=1-180"/>
</dbReference>
<dbReference type="PDB" id="7QH6">
    <property type="method" value="EM"/>
    <property type="resolution" value="3.08 A"/>
    <property type="chains" value="P=1-180"/>
</dbReference>
<dbReference type="PDB" id="7QH7">
    <property type="method" value="EM"/>
    <property type="resolution" value="2.89 A"/>
    <property type="chains" value="P=39-179"/>
</dbReference>
<dbReference type="PDB" id="7QI4">
    <property type="method" value="EM"/>
    <property type="resolution" value="2.21 A"/>
    <property type="chains" value="P=1-180"/>
</dbReference>
<dbReference type="PDB" id="7QI5">
    <property type="method" value="EM"/>
    <property type="resolution" value="2.63 A"/>
    <property type="chains" value="P=1-180"/>
</dbReference>
<dbReference type="PDB" id="7QI6">
    <property type="method" value="EM"/>
    <property type="resolution" value="2.98 A"/>
    <property type="chains" value="P=1-180"/>
</dbReference>
<dbReference type="PDB" id="8ANY">
    <property type="method" value="EM"/>
    <property type="resolution" value="2.85 A"/>
    <property type="chains" value="P=1-180"/>
</dbReference>
<dbReference type="PDB" id="8K2A">
    <property type="method" value="EM"/>
    <property type="resolution" value="2.90 A"/>
    <property type="chains" value="LR=1-180"/>
</dbReference>
<dbReference type="PDB" id="8K2B">
    <property type="method" value="EM"/>
    <property type="resolution" value="3.40 A"/>
    <property type="chains" value="LR=1-180"/>
</dbReference>
<dbReference type="PDB" id="8OIR">
    <property type="method" value="EM"/>
    <property type="resolution" value="3.10 A"/>
    <property type="chains" value="BW=1-180"/>
</dbReference>
<dbReference type="PDB" id="8OIT">
    <property type="method" value="EM"/>
    <property type="resolution" value="2.90 A"/>
    <property type="chains" value="BW=1-180"/>
</dbReference>
<dbReference type="PDB" id="8PK0">
    <property type="method" value="EM"/>
    <property type="resolution" value="3.03 A"/>
    <property type="chains" value="P=1-180"/>
</dbReference>
<dbReference type="PDB" id="8QSJ">
    <property type="method" value="EM"/>
    <property type="resolution" value="3.00 A"/>
    <property type="chains" value="P=1-180"/>
</dbReference>
<dbReference type="PDB" id="8QU1">
    <property type="method" value="EM"/>
    <property type="resolution" value="2.74 A"/>
    <property type="chains" value="P=1-180"/>
</dbReference>
<dbReference type="PDB" id="8QU5">
    <property type="method" value="EM"/>
    <property type="resolution" value="2.42 A"/>
    <property type="chains" value="P=1-180"/>
</dbReference>
<dbReference type="PDB" id="8RRI">
    <property type="method" value="EM"/>
    <property type="resolution" value="2.40 A"/>
    <property type="chains" value="P=1-180"/>
</dbReference>
<dbReference type="PDB" id="8XT0">
    <property type="method" value="EM"/>
    <property type="resolution" value="3.20 A"/>
    <property type="chains" value="LR=1-180"/>
</dbReference>
<dbReference type="PDB" id="8XT1">
    <property type="method" value="EM"/>
    <property type="resolution" value="3.10 A"/>
    <property type="chains" value="LR=1-180"/>
</dbReference>
<dbReference type="PDB" id="8XT2">
    <property type="method" value="EM"/>
    <property type="resolution" value="3.30 A"/>
    <property type="chains" value="LR=1-180"/>
</dbReference>
<dbReference type="PDB" id="8XT3">
    <property type="method" value="EM"/>
    <property type="resolution" value="3.10 A"/>
    <property type="chains" value="LR=1-180"/>
</dbReference>
<dbReference type="PDBsum" id="3J7Y"/>
<dbReference type="PDBsum" id="5OOL"/>
<dbReference type="PDBsum" id="5OOM"/>
<dbReference type="PDBsum" id="6NU2"/>
<dbReference type="PDBsum" id="6NU3"/>
<dbReference type="PDBsum" id="6ZM5"/>
<dbReference type="PDBsum" id="6ZM6"/>
<dbReference type="PDBsum" id="6ZSA"/>
<dbReference type="PDBsum" id="6ZSB"/>
<dbReference type="PDBsum" id="6ZSC"/>
<dbReference type="PDBsum" id="6ZSD"/>
<dbReference type="PDBsum" id="6ZSE"/>
<dbReference type="PDBsum" id="6ZSG"/>
<dbReference type="PDBsum" id="7A5F"/>
<dbReference type="PDBsum" id="7A5G"/>
<dbReference type="PDBsum" id="7A5J"/>
<dbReference type="PDBsum" id="7ODR"/>
<dbReference type="PDBsum" id="7ODS"/>
<dbReference type="PDBsum" id="7ODT"/>
<dbReference type="PDBsum" id="7OF0"/>
<dbReference type="PDBsum" id="7OF2"/>
<dbReference type="PDBsum" id="7OF3"/>
<dbReference type="PDBsum" id="7OF4"/>
<dbReference type="PDBsum" id="7OF5"/>
<dbReference type="PDBsum" id="7OF6"/>
<dbReference type="PDBsum" id="7OF7"/>
<dbReference type="PDBsum" id="7OG4"/>
<dbReference type="PDBsum" id="7OI6"/>
<dbReference type="PDBsum" id="7OI7"/>
<dbReference type="PDBsum" id="7OI8"/>
<dbReference type="PDBsum" id="7OI9"/>
<dbReference type="PDBsum" id="7OIA"/>
<dbReference type="PDBsum" id="7OIB"/>
<dbReference type="PDBsum" id="7OIC"/>
<dbReference type="PDBsum" id="7OID"/>
<dbReference type="PDBsum" id="7OIE"/>
<dbReference type="PDBsum" id="7PD3"/>
<dbReference type="PDBsum" id="7PO4"/>
<dbReference type="PDBsum" id="7QH6"/>
<dbReference type="PDBsum" id="7QH7"/>
<dbReference type="PDBsum" id="7QI4"/>
<dbReference type="PDBsum" id="7QI5"/>
<dbReference type="PDBsum" id="7QI6"/>
<dbReference type="PDBsum" id="8ANY"/>
<dbReference type="PDBsum" id="8K2A"/>
<dbReference type="PDBsum" id="8K2B"/>
<dbReference type="PDBsum" id="8OIR"/>
<dbReference type="PDBsum" id="8OIT"/>
<dbReference type="PDBsum" id="8PK0"/>
<dbReference type="PDBsum" id="8QSJ"/>
<dbReference type="PDBsum" id="8QU1"/>
<dbReference type="PDBsum" id="8QU5"/>
<dbReference type="PDBsum" id="8RRI"/>
<dbReference type="PDBsum" id="8XT0"/>
<dbReference type="PDBsum" id="8XT1"/>
<dbReference type="PDBsum" id="8XT2"/>
<dbReference type="PDBsum" id="8XT3"/>
<dbReference type="EMDB" id="EMD-0514"/>
<dbReference type="EMDB" id="EMD-0515"/>
<dbReference type="EMDB" id="EMD-11278"/>
<dbReference type="EMDB" id="EMD-11279"/>
<dbReference type="EMDB" id="EMD-11391"/>
<dbReference type="EMDB" id="EMD-11392"/>
<dbReference type="EMDB" id="EMD-11393"/>
<dbReference type="EMDB" id="EMD-11394"/>
<dbReference type="EMDB" id="EMD-11395"/>
<dbReference type="EMDB" id="EMD-11397"/>
<dbReference type="EMDB" id="EMD-11641"/>
<dbReference type="EMDB" id="EMD-11642"/>
<dbReference type="EMDB" id="EMD-11645"/>
<dbReference type="EMDB" id="EMD-12845"/>
<dbReference type="EMDB" id="EMD-12846"/>
<dbReference type="EMDB" id="EMD-12847"/>
<dbReference type="EMDB" id="EMD-12865"/>
<dbReference type="EMDB" id="EMD-12867"/>
<dbReference type="EMDB" id="EMD-12868"/>
<dbReference type="EMDB" id="EMD-12869"/>
<dbReference type="EMDB" id="EMD-12870"/>
<dbReference type="EMDB" id="EMD-12871"/>
<dbReference type="EMDB" id="EMD-12872"/>
<dbReference type="EMDB" id="EMD-12877"/>
<dbReference type="EMDB" id="EMD-12919"/>
<dbReference type="EMDB" id="EMD-12920"/>
<dbReference type="EMDB" id="EMD-12921"/>
<dbReference type="EMDB" id="EMD-12922"/>
<dbReference type="EMDB" id="EMD-12923"/>
<dbReference type="EMDB" id="EMD-12924"/>
<dbReference type="EMDB" id="EMD-12925"/>
<dbReference type="EMDB" id="EMD-12926"/>
<dbReference type="EMDB" id="EMD-12927"/>
<dbReference type="EMDB" id="EMD-13329"/>
<dbReference type="EMDB" id="EMD-13562"/>
<dbReference type="EMDB" id="EMD-13965"/>
<dbReference type="EMDB" id="EMD-13967"/>
<dbReference type="EMDB" id="EMD-13980"/>
<dbReference type="EMDB" id="EMD-13981"/>
<dbReference type="EMDB" id="EMD-13982"/>
<dbReference type="EMDB" id="EMD-15544"/>
<dbReference type="EMDB" id="EMD-16897"/>
<dbReference type="EMDB" id="EMD-16899"/>
<dbReference type="EMDB" id="EMD-17719"/>
<dbReference type="EMDB" id="EMD-19460"/>
<dbReference type="EMDB" id="EMD-3842"/>
<dbReference type="EMDB" id="EMD-3843"/>
<dbReference type="SMR" id="Q9H0U6"/>
<dbReference type="BioGRID" id="118846">
    <property type="interactions" value="215"/>
</dbReference>
<dbReference type="ComplexPortal" id="CPX-5226">
    <property type="entry name" value="39S mitochondrial large ribosomal subunit"/>
</dbReference>
<dbReference type="CORUM" id="Q9H0U6"/>
<dbReference type="DIP" id="DIP-56844N"/>
<dbReference type="FunCoup" id="Q9H0U6">
    <property type="interactions" value="1923"/>
</dbReference>
<dbReference type="IntAct" id="Q9H0U6">
    <property type="interactions" value="153"/>
</dbReference>
<dbReference type="MINT" id="Q9H0U6"/>
<dbReference type="STRING" id="9606.ENSP00000356001"/>
<dbReference type="GlyGen" id="Q9H0U6">
    <property type="glycosylation" value="1 site, 1 O-linked glycan (1 site)"/>
</dbReference>
<dbReference type="iPTMnet" id="Q9H0U6"/>
<dbReference type="PhosphoSitePlus" id="Q9H0U6"/>
<dbReference type="BioMuta" id="MRPL18"/>
<dbReference type="DMDM" id="41017797"/>
<dbReference type="jPOST" id="Q9H0U6"/>
<dbReference type="MassIVE" id="Q9H0U6"/>
<dbReference type="PaxDb" id="9606-ENSP00000356001"/>
<dbReference type="PeptideAtlas" id="Q9H0U6"/>
<dbReference type="ProteomicsDB" id="80326"/>
<dbReference type="Pumba" id="Q9H0U6"/>
<dbReference type="TopDownProteomics" id="Q9H0U6"/>
<dbReference type="Antibodypedia" id="33462">
    <property type="antibodies" value="120 antibodies from 21 providers"/>
</dbReference>
<dbReference type="DNASU" id="29074"/>
<dbReference type="Ensembl" id="ENST00000367034.5">
    <property type="protein sequence ID" value="ENSP00000356001.4"/>
    <property type="gene ID" value="ENSG00000112110.10"/>
</dbReference>
<dbReference type="GeneID" id="29074"/>
<dbReference type="KEGG" id="hsa:29074"/>
<dbReference type="MANE-Select" id="ENST00000367034.5">
    <property type="protein sequence ID" value="ENSP00000356001.4"/>
    <property type="RefSeq nucleotide sequence ID" value="NM_014161.5"/>
    <property type="RefSeq protein sequence ID" value="NP_054880.2"/>
</dbReference>
<dbReference type="UCSC" id="uc003qsw.5">
    <property type="organism name" value="human"/>
</dbReference>
<dbReference type="AGR" id="HGNC:14477"/>
<dbReference type="CTD" id="29074"/>
<dbReference type="DisGeNET" id="29074"/>
<dbReference type="GeneCards" id="MRPL18"/>
<dbReference type="HGNC" id="HGNC:14477">
    <property type="gene designation" value="MRPL18"/>
</dbReference>
<dbReference type="HPA" id="ENSG00000112110">
    <property type="expression patterns" value="Low tissue specificity"/>
</dbReference>
<dbReference type="MIM" id="611831">
    <property type="type" value="gene"/>
</dbReference>
<dbReference type="neXtProt" id="NX_Q9H0U6"/>
<dbReference type="OpenTargets" id="ENSG00000112110"/>
<dbReference type="PharmGKB" id="PA30947"/>
<dbReference type="VEuPathDB" id="HostDB:ENSG00000112110"/>
<dbReference type="eggNOG" id="KOG3333">
    <property type="taxonomic scope" value="Eukaryota"/>
</dbReference>
<dbReference type="GeneTree" id="ENSGT00390000006394"/>
<dbReference type="HOGENOM" id="CLU_108540_0_0_1"/>
<dbReference type="InParanoid" id="Q9H0U6"/>
<dbReference type="OMA" id="TSEWAIK"/>
<dbReference type="OrthoDB" id="1932324at2759"/>
<dbReference type="PAN-GO" id="Q9H0U6">
    <property type="GO annotations" value="2 GO annotations based on evolutionary models"/>
</dbReference>
<dbReference type="PhylomeDB" id="Q9H0U6"/>
<dbReference type="TreeFam" id="TF313292"/>
<dbReference type="PathwayCommons" id="Q9H0U6"/>
<dbReference type="Reactome" id="R-HSA-5368286">
    <property type="pathway name" value="Mitochondrial translation initiation"/>
</dbReference>
<dbReference type="Reactome" id="R-HSA-5389840">
    <property type="pathway name" value="Mitochondrial translation elongation"/>
</dbReference>
<dbReference type="Reactome" id="R-HSA-5419276">
    <property type="pathway name" value="Mitochondrial translation termination"/>
</dbReference>
<dbReference type="SignaLink" id="Q9H0U6"/>
<dbReference type="SIGNOR" id="Q9H0U6"/>
<dbReference type="BioGRID-ORCS" id="29074">
    <property type="hits" value="471 hits in 1168 CRISPR screens"/>
</dbReference>
<dbReference type="ChiTaRS" id="MRPL18">
    <property type="organism name" value="human"/>
</dbReference>
<dbReference type="GeneWiki" id="MRPL18"/>
<dbReference type="GenomeRNAi" id="29074"/>
<dbReference type="Pharos" id="Q9H0U6">
    <property type="development level" value="Tbio"/>
</dbReference>
<dbReference type="PRO" id="PR:Q9H0U6"/>
<dbReference type="Proteomes" id="UP000005640">
    <property type="component" value="Chromosome 6"/>
</dbReference>
<dbReference type="RNAct" id="Q9H0U6">
    <property type="molecule type" value="protein"/>
</dbReference>
<dbReference type="Bgee" id="ENSG00000112110">
    <property type="expression patterns" value="Expressed in oocyte and 203 other cell types or tissues"/>
</dbReference>
<dbReference type="GO" id="GO:0005615">
    <property type="term" value="C:extracellular space"/>
    <property type="evidence" value="ECO:0007005"/>
    <property type="project" value="UniProtKB"/>
</dbReference>
<dbReference type="GO" id="GO:0005743">
    <property type="term" value="C:mitochondrial inner membrane"/>
    <property type="evidence" value="ECO:0000304"/>
    <property type="project" value="Reactome"/>
</dbReference>
<dbReference type="GO" id="GO:0005762">
    <property type="term" value="C:mitochondrial large ribosomal subunit"/>
    <property type="evidence" value="ECO:0000314"/>
    <property type="project" value="UniProtKB"/>
</dbReference>
<dbReference type="GO" id="GO:0005761">
    <property type="term" value="C:mitochondrial ribosome"/>
    <property type="evidence" value="ECO:0000303"/>
    <property type="project" value="UniProtKB"/>
</dbReference>
<dbReference type="GO" id="GO:0005739">
    <property type="term" value="C:mitochondrion"/>
    <property type="evidence" value="ECO:0000314"/>
    <property type="project" value="UniProtKB"/>
</dbReference>
<dbReference type="GO" id="GO:0008097">
    <property type="term" value="F:5S rRNA binding"/>
    <property type="evidence" value="ECO:0000314"/>
    <property type="project" value="UniProtKB"/>
</dbReference>
<dbReference type="GO" id="GO:0003735">
    <property type="term" value="F:structural constituent of ribosome"/>
    <property type="evidence" value="ECO:0000303"/>
    <property type="project" value="UniProtKB"/>
</dbReference>
<dbReference type="GO" id="GO:0032543">
    <property type="term" value="P:mitochondrial translation"/>
    <property type="evidence" value="ECO:0000303"/>
    <property type="project" value="ComplexPortal"/>
</dbReference>
<dbReference type="GO" id="GO:0035928">
    <property type="term" value="P:rRNA import into mitochondrion"/>
    <property type="evidence" value="ECO:0000314"/>
    <property type="project" value="UniProtKB"/>
</dbReference>
<dbReference type="GO" id="GO:0006412">
    <property type="term" value="P:translation"/>
    <property type="evidence" value="ECO:0000303"/>
    <property type="project" value="UniProtKB"/>
</dbReference>
<dbReference type="CDD" id="cd00432">
    <property type="entry name" value="Ribosomal_L18_L5e"/>
    <property type="match status" value="1"/>
</dbReference>
<dbReference type="FunFam" id="3.30.420.80:FF:000005">
    <property type="entry name" value="39S ribosomal protein L18, mitochondrial"/>
    <property type="match status" value="1"/>
</dbReference>
<dbReference type="Gene3D" id="3.30.420.80">
    <property type="entry name" value="Ribosomal protein S11"/>
    <property type="match status" value="1"/>
</dbReference>
<dbReference type="InterPro" id="IPR005484">
    <property type="entry name" value="Ribosomal_uL18_bac/euk"/>
</dbReference>
<dbReference type="InterPro" id="IPR036967">
    <property type="entry name" value="Ribosomal_uS11_sf"/>
</dbReference>
<dbReference type="PANTHER" id="PTHR12899">
    <property type="entry name" value="39S RIBOSOMAL PROTEIN L18, MITOCHONDRIAL"/>
    <property type="match status" value="1"/>
</dbReference>
<dbReference type="PANTHER" id="PTHR12899:SF3">
    <property type="entry name" value="LARGE RIBOSOMAL SUBUNIT PROTEIN UL18M"/>
    <property type="match status" value="1"/>
</dbReference>
<dbReference type="Pfam" id="PF00861">
    <property type="entry name" value="Ribosomal_L18p"/>
    <property type="match status" value="1"/>
</dbReference>
<dbReference type="SUPFAM" id="SSF53137">
    <property type="entry name" value="Translational machinery components"/>
    <property type="match status" value="1"/>
</dbReference>
<keyword id="KW-0002">3D-structure</keyword>
<keyword id="KW-0143">Chaperone</keyword>
<keyword id="KW-0496">Mitochondrion</keyword>
<keyword id="KW-1267">Proteomics identification</keyword>
<keyword id="KW-1185">Reference proteome</keyword>
<keyword id="KW-0687">Ribonucleoprotein</keyword>
<keyword id="KW-0689">Ribosomal protein</keyword>
<keyword id="KW-0694">RNA-binding</keyword>
<keyword id="KW-0809">Transit peptide</keyword>
<keyword id="KW-0813">Transport</keyword>
<organism evidence="9">
    <name type="scientific">Homo sapiens</name>
    <name type="common">Human</name>
    <dbReference type="NCBI Taxonomy" id="9606"/>
    <lineage>
        <taxon>Eukaryota</taxon>
        <taxon>Metazoa</taxon>
        <taxon>Chordata</taxon>
        <taxon>Craniata</taxon>
        <taxon>Vertebrata</taxon>
        <taxon>Euteleostomi</taxon>
        <taxon>Mammalia</taxon>
        <taxon>Eutheria</taxon>
        <taxon>Euarchontoglires</taxon>
        <taxon>Primates</taxon>
        <taxon>Haplorrhini</taxon>
        <taxon>Catarrhini</taxon>
        <taxon>Hominidae</taxon>
        <taxon>Homo</taxon>
    </lineage>
</organism>
<protein>
    <recommendedName>
        <fullName evidence="7">Large ribosomal subunit protein uL18m</fullName>
    </recommendedName>
    <alternativeName>
        <fullName>39S ribosomal protein L18, mitochondrial</fullName>
        <shortName>L18mt</shortName>
        <shortName>MRP-L18</shortName>
    </alternativeName>
</protein>
<comment type="function">
    <text evidence="3">Together with thiosulfate sulfurtransferase (TST), acts as a mitochondrial import factor for the cytosolic 5S rRNA. The precursor form shows RNA chaperone activity; is able to fold the 5S rRNA into an import-competent conformation that is recognized by rhodanese (TST). Both the cytoplasmic and mitochondrial forms are able to bind to the helix IV-loop D in the gamma domain of the 5S rRNA.</text>
</comment>
<comment type="subunit">
    <text evidence="4 5 6">Component of the mitochondrial large ribosomal subunit (mt-LSU) (PubMed:25278503, PubMed:28892042, PubMed:35177605). Mature mammalian 55S mitochondrial ribosomes consist of a small (28S) and a large (39S) subunit. The 28S small subunit contains a 12S ribosomal RNA (12S mt-rRNA) and 30 different proteins. The 39S large subunit contains a 16S rRNA (16S mt-rRNA), a copy of mitochondrial valine transfer RNA (mt-tRNA(Val)), which plays an integral structural role, and 52 different proteins.</text>
</comment>
<comment type="interaction">
    <interactant intactId="EBI-2560240">
        <id>Q9H0U6</id>
    </interactant>
    <interactant intactId="EBI-2865663">
        <id>Q13571</id>
        <label>LAPTM5</label>
    </interactant>
    <organismsDiffer>false</organismsDiffer>
    <experiments>3</experiments>
</comment>
<comment type="interaction">
    <interactant intactId="EBI-2560240">
        <id>Q9H0U6</id>
    </interactant>
    <interactant intactId="EBI-720441">
        <id>Q96DV4</id>
        <label>MRPL38</label>
    </interactant>
    <organismsDiffer>false</organismsDiffer>
    <experiments>6</experiments>
</comment>
<comment type="subcellular location">
    <subcellularLocation>
        <location evidence="4 5">Mitochondrion</location>
    </subcellularLocation>
</comment>
<comment type="similarity">
    <text evidence="8">Belongs to the universal ribosomal protein uL18 family.</text>
</comment>
<evidence type="ECO:0000255" key="1"/>
<evidence type="ECO:0000269" key="2">
    <source>
    </source>
</evidence>
<evidence type="ECO:0000269" key="3">
    <source>
    </source>
</evidence>
<evidence type="ECO:0000269" key="4">
    <source>
    </source>
</evidence>
<evidence type="ECO:0000269" key="5">
    <source>
    </source>
</evidence>
<evidence type="ECO:0000269" key="6">
    <source>
    </source>
</evidence>
<evidence type="ECO:0000303" key="7">
    <source>
    </source>
</evidence>
<evidence type="ECO:0000305" key="8"/>
<evidence type="ECO:0000312" key="9">
    <source>
        <dbReference type="EMBL" id="CAB66568.1"/>
    </source>
</evidence>
<evidence type="ECO:0007744" key="10">
    <source>
        <dbReference type="PDB" id="5OOL"/>
    </source>
</evidence>
<evidence type="ECO:0007744" key="11">
    <source>
        <dbReference type="PDB" id="5OOM"/>
    </source>
</evidence>
<evidence type="ECO:0007744" key="12">
    <source>
        <dbReference type="PDB" id="7QH6"/>
    </source>
</evidence>
<evidence type="ECO:0007744" key="13">
    <source>
        <dbReference type="PDB" id="7QH7"/>
    </source>
</evidence>
<evidence type="ECO:0007829" key="14">
    <source>
        <dbReference type="PDB" id="3J7Y"/>
    </source>
</evidence>
<evidence type="ECO:0007829" key="15">
    <source>
        <dbReference type="PDB" id="5OOL"/>
    </source>
</evidence>
<evidence type="ECO:0007829" key="16">
    <source>
        <dbReference type="PDB" id="7OF0"/>
    </source>
</evidence>
<evidence type="ECO:0007829" key="17">
    <source>
        <dbReference type="PDB" id="7QH7"/>
    </source>
</evidence>
<sequence length="180" mass="20577">MALRSRFWGLFSVCRNPGCRFAALSTSSEPAAKPEVDPVENEAVAPEFTNRNPRNLELLSVARKERGWRTVFPSREFWHRLRVIRTQHHVEALVEHQNGKVVVSASTREWAIKKHLYSTRNVVACESIGRVLAQRCLEAGINFMVYQPTPWEAASDSMKRLQSAMTEGGVVLREPQRIYE</sequence>
<reference key="1">
    <citation type="journal article" date="2001" name="Genome Res.">
        <title>Towards a catalog of human genes and proteins: sequencing and analysis of 500 novel complete protein coding human cDNAs.</title>
        <authorList>
            <person name="Wiemann S."/>
            <person name="Weil B."/>
            <person name="Wellenreuther R."/>
            <person name="Gassenhuber J."/>
            <person name="Glassl S."/>
            <person name="Ansorge W."/>
            <person name="Boecher M."/>
            <person name="Bloecker H."/>
            <person name="Bauersachs S."/>
            <person name="Blum H."/>
            <person name="Lauber J."/>
            <person name="Duesterhoeft A."/>
            <person name="Beyer A."/>
            <person name="Koehrer K."/>
            <person name="Strack N."/>
            <person name="Mewes H.-W."/>
            <person name="Ottenwaelder B."/>
            <person name="Obermaier B."/>
            <person name="Tampe J."/>
            <person name="Heubner D."/>
            <person name="Wambutt R."/>
            <person name="Korn B."/>
            <person name="Klein M."/>
            <person name="Poustka A."/>
        </authorList>
    </citation>
    <scope>NUCLEOTIDE SEQUENCE [LARGE SCALE MRNA]</scope>
    <source>
        <tissue>Brain</tissue>
    </source>
</reference>
<reference key="2">
    <citation type="journal article" date="2000" name="Genome Res.">
        <title>Cloning and functional analysis of cDNAs with open reading frames for 300 previously undefined genes expressed in CD34+ hematopoietic stem/progenitor cells.</title>
        <authorList>
            <person name="Zhang Q.-H."/>
            <person name="Ye M."/>
            <person name="Wu X.-Y."/>
            <person name="Ren S.-X."/>
            <person name="Zhao M."/>
            <person name="Zhao C.-J."/>
            <person name="Fu G."/>
            <person name="Shen Y."/>
            <person name="Fan H.-Y."/>
            <person name="Lu G."/>
            <person name="Zhong M."/>
            <person name="Xu X.-R."/>
            <person name="Han Z.-G."/>
            <person name="Zhang J.-W."/>
            <person name="Tao J."/>
            <person name="Huang Q.-H."/>
            <person name="Zhou J."/>
            <person name="Hu G.-X."/>
            <person name="Gu J."/>
            <person name="Chen S.-J."/>
            <person name="Chen Z."/>
        </authorList>
    </citation>
    <scope>NUCLEOTIDE SEQUENCE [LARGE SCALE MRNA]</scope>
    <scope>VARIANT GLN-6</scope>
    <source>
        <tissue>Umbilical cord blood</tissue>
    </source>
</reference>
<reference evidence="8 9" key="3">
    <citation type="submission" date="2004-06" db="EMBL/GenBank/DDBJ databases">
        <title>Cloning of human full open reading frames in Gateway(TM) system entry vector (pDONR201).</title>
        <authorList>
            <person name="Ebert L."/>
            <person name="Schick M."/>
            <person name="Neubert P."/>
            <person name="Schatten R."/>
            <person name="Henze S."/>
            <person name="Korn B."/>
        </authorList>
    </citation>
    <scope>NUCLEOTIDE SEQUENCE [LARGE SCALE MRNA]</scope>
</reference>
<reference key="4">
    <citation type="journal article" date="2003" name="Nature">
        <title>The DNA sequence and analysis of human chromosome 6.</title>
        <authorList>
            <person name="Mungall A.J."/>
            <person name="Palmer S.A."/>
            <person name="Sims S.K."/>
            <person name="Edwards C.A."/>
            <person name="Ashurst J.L."/>
            <person name="Wilming L."/>
            <person name="Jones M.C."/>
            <person name="Horton R."/>
            <person name="Hunt S.E."/>
            <person name="Scott C.E."/>
            <person name="Gilbert J.G.R."/>
            <person name="Clamp M.E."/>
            <person name="Bethel G."/>
            <person name="Milne S."/>
            <person name="Ainscough R."/>
            <person name="Almeida J.P."/>
            <person name="Ambrose K.D."/>
            <person name="Andrews T.D."/>
            <person name="Ashwell R.I.S."/>
            <person name="Babbage A.K."/>
            <person name="Bagguley C.L."/>
            <person name="Bailey J."/>
            <person name="Banerjee R."/>
            <person name="Barker D.J."/>
            <person name="Barlow K.F."/>
            <person name="Bates K."/>
            <person name="Beare D.M."/>
            <person name="Beasley H."/>
            <person name="Beasley O."/>
            <person name="Bird C.P."/>
            <person name="Blakey S.E."/>
            <person name="Bray-Allen S."/>
            <person name="Brook J."/>
            <person name="Brown A.J."/>
            <person name="Brown J.Y."/>
            <person name="Burford D.C."/>
            <person name="Burrill W."/>
            <person name="Burton J."/>
            <person name="Carder C."/>
            <person name="Carter N.P."/>
            <person name="Chapman J.C."/>
            <person name="Clark S.Y."/>
            <person name="Clark G."/>
            <person name="Clee C.M."/>
            <person name="Clegg S."/>
            <person name="Cobley V."/>
            <person name="Collier R.E."/>
            <person name="Collins J.E."/>
            <person name="Colman L.K."/>
            <person name="Corby N.R."/>
            <person name="Coville G.J."/>
            <person name="Culley K.M."/>
            <person name="Dhami P."/>
            <person name="Davies J."/>
            <person name="Dunn M."/>
            <person name="Earthrowl M.E."/>
            <person name="Ellington A.E."/>
            <person name="Evans K.A."/>
            <person name="Faulkner L."/>
            <person name="Francis M.D."/>
            <person name="Frankish A."/>
            <person name="Frankland J."/>
            <person name="French L."/>
            <person name="Garner P."/>
            <person name="Garnett J."/>
            <person name="Ghori M.J."/>
            <person name="Gilby L.M."/>
            <person name="Gillson C.J."/>
            <person name="Glithero R.J."/>
            <person name="Grafham D.V."/>
            <person name="Grant M."/>
            <person name="Gribble S."/>
            <person name="Griffiths C."/>
            <person name="Griffiths M.N.D."/>
            <person name="Hall R."/>
            <person name="Halls K.S."/>
            <person name="Hammond S."/>
            <person name="Harley J.L."/>
            <person name="Hart E.A."/>
            <person name="Heath P.D."/>
            <person name="Heathcott R."/>
            <person name="Holmes S.J."/>
            <person name="Howden P.J."/>
            <person name="Howe K.L."/>
            <person name="Howell G.R."/>
            <person name="Huckle E."/>
            <person name="Humphray S.J."/>
            <person name="Humphries M.D."/>
            <person name="Hunt A.R."/>
            <person name="Johnson C.M."/>
            <person name="Joy A.A."/>
            <person name="Kay M."/>
            <person name="Keenan S.J."/>
            <person name="Kimberley A.M."/>
            <person name="King A."/>
            <person name="Laird G.K."/>
            <person name="Langford C."/>
            <person name="Lawlor S."/>
            <person name="Leongamornlert D.A."/>
            <person name="Leversha M."/>
            <person name="Lloyd C.R."/>
            <person name="Lloyd D.M."/>
            <person name="Loveland J.E."/>
            <person name="Lovell J."/>
            <person name="Martin S."/>
            <person name="Mashreghi-Mohammadi M."/>
            <person name="Maslen G.L."/>
            <person name="Matthews L."/>
            <person name="McCann O.T."/>
            <person name="McLaren S.J."/>
            <person name="McLay K."/>
            <person name="McMurray A."/>
            <person name="Moore M.J.F."/>
            <person name="Mullikin J.C."/>
            <person name="Niblett D."/>
            <person name="Nickerson T."/>
            <person name="Novik K.L."/>
            <person name="Oliver K."/>
            <person name="Overton-Larty E.K."/>
            <person name="Parker A."/>
            <person name="Patel R."/>
            <person name="Pearce A.V."/>
            <person name="Peck A.I."/>
            <person name="Phillimore B.J.C.T."/>
            <person name="Phillips S."/>
            <person name="Plumb R.W."/>
            <person name="Porter K.M."/>
            <person name="Ramsey Y."/>
            <person name="Ranby S.A."/>
            <person name="Rice C.M."/>
            <person name="Ross M.T."/>
            <person name="Searle S.M."/>
            <person name="Sehra H.K."/>
            <person name="Sheridan E."/>
            <person name="Skuce C.D."/>
            <person name="Smith S."/>
            <person name="Smith M."/>
            <person name="Spraggon L."/>
            <person name="Squares S.L."/>
            <person name="Steward C.A."/>
            <person name="Sycamore N."/>
            <person name="Tamlyn-Hall G."/>
            <person name="Tester J."/>
            <person name="Theaker A.J."/>
            <person name="Thomas D.W."/>
            <person name="Thorpe A."/>
            <person name="Tracey A."/>
            <person name="Tromans A."/>
            <person name="Tubby B."/>
            <person name="Wall M."/>
            <person name="Wallis J.M."/>
            <person name="West A.P."/>
            <person name="White S.S."/>
            <person name="Whitehead S.L."/>
            <person name="Whittaker H."/>
            <person name="Wild A."/>
            <person name="Willey D.J."/>
            <person name="Wilmer T.E."/>
            <person name="Wood J.M."/>
            <person name="Wray P.W."/>
            <person name="Wyatt J.C."/>
            <person name="Young L."/>
            <person name="Younger R.M."/>
            <person name="Bentley D.R."/>
            <person name="Coulson A."/>
            <person name="Durbin R.M."/>
            <person name="Hubbard T."/>
            <person name="Sulston J.E."/>
            <person name="Dunham I."/>
            <person name="Rogers J."/>
            <person name="Beck S."/>
        </authorList>
    </citation>
    <scope>NUCLEOTIDE SEQUENCE [LARGE SCALE GENOMIC DNA]</scope>
</reference>
<reference key="5">
    <citation type="journal article" date="2004" name="Genome Res.">
        <title>The status, quality, and expansion of the NIH full-length cDNA project: the Mammalian Gene Collection (MGC).</title>
        <authorList>
            <consortium name="The MGC Project Team"/>
        </authorList>
    </citation>
    <scope>NUCLEOTIDE SEQUENCE [LARGE SCALE MRNA]</scope>
    <source>
        <tissue>Eye</tissue>
    </source>
</reference>
<reference key="6">
    <citation type="journal article" date="2001" name="J. Biol. Chem.">
        <title>The large subunit of the mammalian mitochondrial ribosome. Analysis of the complement of ribosomal proteins present.</title>
        <authorList>
            <person name="Koc E.C."/>
            <person name="Burkhart W."/>
            <person name="Blackburn K."/>
            <person name="Moyer M.B."/>
            <person name="Schlatzer D.M."/>
            <person name="Moseley A."/>
            <person name="Spremulli L.L."/>
        </authorList>
    </citation>
    <scope>IDENTIFICATION</scope>
</reference>
<reference key="7">
    <citation type="journal article" date="2011" name="BMC Syst. Biol.">
        <title>Initial characterization of the human central proteome.</title>
        <authorList>
            <person name="Burkard T.R."/>
            <person name="Planyavsky M."/>
            <person name="Kaupe I."/>
            <person name="Breitwieser F.P."/>
            <person name="Buerckstuemmer T."/>
            <person name="Bennett K.L."/>
            <person name="Superti-Furga G."/>
            <person name="Colinge J."/>
        </authorList>
    </citation>
    <scope>IDENTIFICATION BY MASS SPECTROMETRY [LARGE SCALE ANALYSIS]</scope>
</reference>
<reference key="8">
    <citation type="journal article" date="2011" name="Genes Dev.">
        <title>Biological significance of 5S rRNA import into human mitochondria: role of ribosomal protein MRP-L18.</title>
        <authorList>
            <person name="Smirnov A."/>
            <person name="Entelis N."/>
            <person name="Martin R.P."/>
            <person name="Tarassov I."/>
        </authorList>
    </citation>
    <scope>FUNCTION</scope>
    <scope>RNA-BINDING</scope>
</reference>
<reference key="9">
    <citation type="journal article" date="2015" name="Proteomics">
        <title>N-terminome analysis of the human mitochondrial proteome.</title>
        <authorList>
            <person name="Vaca Jacome A.S."/>
            <person name="Rabilloud T."/>
            <person name="Schaeffer-Reiss C."/>
            <person name="Rompais M."/>
            <person name="Ayoub D."/>
            <person name="Lane L."/>
            <person name="Bairoch A."/>
            <person name="Van Dorsselaer A."/>
            <person name="Carapito C."/>
        </authorList>
    </citation>
    <scope>IDENTIFICATION BY MASS SPECTROMETRY [LARGE SCALE ANALYSIS]</scope>
</reference>
<reference key="10">
    <citation type="journal article" date="2014" name="Science">
        <title>Structure of the large ribosomal subunit from human mitochondria.</title>
        <authorList>
            <person name="Brown A."/>
            <person name="Amunts A."/>
            <person name="Bai X.C."/>
            <person name="Sugimoto Y."/>
            <person name="Edwards P.C."/>
            <person name="Murshudov G."/>
            <person name="Scheres S.H."/>
            <person name="Ramakrishnan V."/>
        </authorList>
    </citation>
    <scope>STRUCTURE BY ELECTRON MICROSCOPY (3.40 ANGSTROMS)</scope>
    <scope>SUBCELLULAR LOCATION</scope>
    <scope>SUBUNIT</scope>
</reference>
<reference evidence="10 11" key="11">
    <citation type="journal article" date="2017" name="Nat. Struct. Mol. Biol.">
        <title>Structures of the human mitochondrial ribosome in native states of assembly.</title>
        <authorList>
            <person name="Brown A."/>
            <person name="Rathore S."/>
            <person name="Kimanius D."/>
            <person name="Aibara S."/>
            <person name="Bai X.C."/>
            <person name="Rorbach J."/>
            <person name="Amunts A."/>
            <person name="Ramakrishnan V."/>
        </authorList>
    </citation>
    <scope>STRUCTURE BY ELECTRON MICROSCOPY (3.03 ANGSTROMS)</scope>
    <scope>SUBCELLULAR LOCATION</scope>
    <scope>SUBUNIT</scope>
</reference>
<reference evidence="12 13" key="12">
    <citation type="journal article" date="2022" name="Nat. Commun.">
        <title>A late-stage assembly checkpoint of the human mitochondrial ribosome large subunit.</title>
        <authorList>
            <person name="Rebelo-Guiomar P."/>
            <person name="Pellegrino S."/>
            <person name="Dent K.C."/>
            <person name="Sas-Chen A."/>
            <person name="Miller-Fleming L."/>
            <person name="Garone C."/>
            <person name="Van Haute L."/>
            <person name="Rogan J.F."/>
            <person name="Dinan A."/>
            <person name="Firth A.E."/>
            <person name="Andrews B."/>
            <person name="Whitworth A.J."/>
            <person name="Schwartz S."/>
            <person name="Warren A.J."/>
            <person name="Minczuk M."/>
        </authorList>
    </citation>
    <scope>STRUCTURE BY ELECTRON MICROSCOPY (2.9 ANGSTROMS) IN COMPLEX WITH MTLSU</scope>
    <scope>SUBUNIT</scope>
</reference>
<accession>Q9H0U6</accession>
<accession>Q5TAP9</accession>
<accession>Q9NZW8</accession>
<name>RM18_HUMAN</name>
<proteinExistence type="evidence at protein level"/>
<feature type="transit peptide" description="Mitochondrion" evidence="1">
    <location>
        <begin position="1"/>
        <end status="unknown"/>
    </location>
</feature>
<feature type="chain" id="PRO_0000030556" description="Large ribosomal subunit protein uL18m">
    <location>
        <begin status="unknown"/>
        <end position="180"/>
    </location>
</feature>
<feature type="sequence variant" id="VAR_024609" description="In dbSNP:rs1128670." evidence="2">
    <original>R</original>
    <variation>Q</variation>
    <location>
        <position position="6"/>
    </location>
</feature>
<feature type="sequence conflict" description="In Ref. 2; AAF29043." evidence="8" ref="2">
    <location>
        <position position="10"/>
    </location>
</feature>
<feature type="helix" evidence="17">
    <location>
        <begin position="40"/>
        <end position="42"/>
    </location>
</feature>
<feature type="strand" evidence="16">
    <location>
        <begin position="46"/>
        <end position="48"/>
    </location>
</feature>
<feature type="helix" evidence="16">
    <location>
        <begin position="55"/>
        <end position="58"/>
    </location>
</feature>
<feature type="strand" evidence="16">
    <location>
        <begin position="71"/>
        <end position="73"/>
    </location>
</feature>
<feature type="strand" evidence="16">
    <location>
        <begin position="78"/>
        <end position="85"/>
    </location>
</feature>
<feature type="strand" evidence="16">
    <location>
        <begin position="90"/>
        <end position="96"/>
    </location>
</feature>
<feature type="strand" evidence="15">
    <location>
        <begin position="97"/>
        <end position="99"/>
    </location>
</feature>
<feature type="strand" evidence="16">
    <location>
        <begin position="101"/>
        <end position="106"/>
    </location>
</feature>
<feature type="helix" evidence="14">
    <location>
        <begin position="107"/>
        <end position="109"/>
    </location>
</feature>
<feature type="helix" evidence="16">
    <location>
        <begin position="110"/>
        <end position="113"/>
    </location>
</feature>
<feature type="strand" evidence="16">
    <location>
        <begin position="119"/>
        <end position="121"/>
    </location>
</feature>
<feature type="helix" evidence="16">
    <location>
        <begin position="122"/>
        <end position="139"/>
    </location>
</feature>
<feature type="helix" evidence="16">
    <location>
        <begin position="150"/>
        <end position="154"/>
    </location>
</feature>
<feature type="helix" evidence="16">
    <location>
        <begin position="156"/>
        <end position="168"/>
    </location>
</feature>
<feature type="strand" evidence="16">
    <location>
        <begin position="171"/>
        <end position="173"/>
    </location>
</feature>
<gene>
    <name type="primary">MRPL18</name>
    <name type="ORF">HSPC071</name>
</gene>